<organism>
    <name type="scientific">Staphylococcus aureus (strain Mu50 / ATCC 700699)</name>
    <dbReference type="NCBI Taxonomy" id="158878"/>
    <lineage>
        <taxon>Bacteria</taxon>
        <taxon>Bacillati</taxon>
        <taxon>Bacillota</taxon>
        <taxon>Bacilli</taxon>
        <taxon>Bacillales</taxon>
        <taxon>Staphylococcaceae</taxon>
        <taxon>Staphylococcus</taxon>
    </lineage>
</organism>
<comment type="function">
    <text evidence="1">Part of the ABC transporter complex NikABCDE (Opp2) involved in nickel import. Probably responsible for energy coupling to the transport system.</text>
</comment>
<comment type="catalytic activity">
    <reaction evidence="1">
        <text>Ni(2+)(out) + ATP + H2O = Ni(2+)(in) + ADP + phosphate + H(+)</text>
        <dbReference type="Rhea" id="RHEA:15557"/>
        <dbReference type="ChEBI" id="CHEBI:15377"/>
        <dbReference type="ChEBI" id="CHEBI:15378"/>
        <dbReference type="ChEBI" id="CHEBI:30616"/>
        <dbReference type="ChEBI" id="CHEBI:43474"/>
        <dbReference type="ChEBI" id="CHEBI:49786"/>
        <dbReference type="ChEBI" id="CHEBI:456216"/>
        <dbReference type="EC" id="7.2.2.11"/>
    </reaction>
    <physiologicalReaction direction="left-to-right" evidence="1">
        <dbReference type="Rhea" id="RHEA:15558"/>
    </physiologicalReaction>
</comment>
<comment type="subunit">
    <text evidence="1">The complex is composed of two ATP-binding proteins (NikD and NikE), two transmembrane proteins (NikB and NikC) and a solute-binding protein (NikA).</text>
</comment>
<comment type="subcellular location">
    <subcellularLocation>
        <location evidence="3">Cell membrane</location>
        <topology evidence="3">Peripheral membrane protein</topology>
    </subcellularLocation>
</comment>
<comment type="similarity">
    <text evidence="3">Belongs to the ABC transporter superfamily.</text>
</comment>
<keyword id="KW-0067">ATP-binding</keyword>
<keyword id="KW-1003">Cell membrane</keyword>
<keyword id="KW-0406">Ion transport</keyword>
<keyword id="KW-0472">Membrane</keyword>
<keyword id="KW-0533">Nickel</keyword>
<keyword id="KW-0921">Nickel transport</keyword>
<keyword id="KW-0547">Nucleotide-binding</keyword>
<keyword id="KW-1278">Translocase</keyword>
<keyword id="KW-0813">Transport</keyword>
<sequence length="257" mass="29699">MSLIDIQNLTIKNTCEKYLIKGIDLKIFSQQINALIGESGAGKSLIAKALLEYLPFDLSCTYDSYQFDGENISRLSQYYGHTIGYISQNYAESFNDHTKLGKQLTAIYRKHYKSSKEEALSKIDKALSWVNLQSKDILNKYSFQLSGGQLERVYIASVLMLEPKLIIADEPVASLDALNGNQVMDLLQHIVLEHGQTLFIITHNLSHVLKYCQYIYVLKEGQIIERGNINHFKYEHLHPYTERLIKYRTQLKRDYYD</sequence>
<accession>Q99UA2</accession>
<name>NIKD_STAAM</name>
<reference key="1">
    <citation type="journal article" date="2001" name="Lancet">
        <title>Whole genome sequencing of meticillin-resistant Staphylococcus aureus.</title>
        <authorList>
            <person name="Kuroda M."/>
            <person name="Ohta T."/>
            <person name="Uchiyama I."/>
            <person name="Baba T."/>
            <person name="Yuzawa H."/>
            <person name="Kobayashi I."/>
            <person name="Cui L."/>
            <person name="Oguchi A."/>
            <person name="Aoki K."/>
            <person name="Nagai Y."/>
            <person name="Lian J.-Q."/>
            <person name="Ito T."/>
            <person name="Kanamori M."/>
            <person name="Matsumaru H."/>
            <person name="Maruyama A."/>
            <person name="Murakami H."/>
            <person name="Hosoyama A."/>
            <person name="Mizutani-Ui Y."/>
            <person name="Takahashi N.K."/>
            <person name="Sawano T."/>
            <person name="Inoue R."/>
            <person name="Kaito C."/>
            <person name="Sekimizu K."/>
            <person name="Hirakawa H."/>
            <person name="Kuhara S."/>
            <person name="Goto S."/>
            <person name="Yabuzaki J."/>
            <person name="Kanehisa M."/>
            <person name="Yamashita A."/>
            <person name="Oshima K."/>
            <person name="Furuya K."/>
            <person name="Yoshino C."/>
            <person name="Shiba T."/>
            <person name="Hattori M."/>
            <person name="Ogasawara N."/>
            <person name="Hayashi H."/>
            <person name="Hiramatsu K."/>
        </authorList>
    </citation>
    <scope>NUCLEOTIDE SEQUENCE [LARGE SCALE GENOMIC DNA]</scope>
    <source>
        <strain>Mu50 / ATCC 700699</strain>
    </source>
</reference>
<feature type="chain" id="PRO_0000276796" description="Nickel import system ATP-binding protein NikD">
    <location>
        <begin position="1"/>
        <end position="257"/>
    </location>
</feature>
<feature type="domain" description="ABC transporter" evidence="2">
    <location>
        <begin position="4"/>
        <end position="245"/>
    </location>
</feature>
<feature type="binding site" evidence="2">
    <location>
        <begin position="37"/>
        <end position="44"/>
    </location>
    <ligand>
        <name>ATP</name>
        <dbReference type="ChEBI" id="CHEBI:30616"/>
    </ligand>
</feature>
<gene>
    <name evidence="1" type="primary">nikD</name>
    <name type="synonym">oppD2</name>
    <name type="ordered locus">SAV1380</name>
</gene>
<evidence type="ECO:0000250" key="1">
    <source>
        <dbReference type="UniProtKB" id="Q2FYQ7"/>
    </source>
</evidence>
<evidence type="ECO:0000255" key="2">
    <source>
        <dbReference type="PROSITE-ProRule" id="PRU00434"/>
    </source>
</evidence>
<evidence type="ECO:0000305" key="3"/>
<protein>
    <recommendedName>
        <fullName evidence="1">Nickel import system ATP-binding protein NikD</fullName>
        <ecNumber evidence="1">7.2.2.11</ecNumber>
    </recommendedName>
</protein>
<proteinExistence type="inferred from homology"/>
<dbReference type="EC" id="7.2.2.11" evidence="1"/>
<dbReference type="EMBL" id="BA000017">
    <property type="protein sequence ID" value="BAB57542.1"/>
    <property type="molecule type" value="Genomic_DNA"/>
</dbReference>
<dbReference type="RefSeq" id="WP_000052315.1">
    <property type="nucleotide sequence ID" value="NC_002758.2"/>
</dbReference>
<dbReference type="SMR" id="Q99UA2"/>
<dbReference type="KEGG" id="sav:SAV1380"/>
<dbReference type="HOGENOM" id="CLU_000604_1_23_9"/>
<dbReference type="PhylomeDB" id="Q99UA2"/>
<dbReference type="Proteomes" id="UP000002481">
    <property type="component" value="Chromosome"/>
</dbReference>
<dbReference type="GO" id="GO:0005886">
    <property type="term" value="C:plasma membrane"/>
    <property type="evidence" value="ECO:0007669"/>
    <property type="project" value="UniProtKB-SubCell"/>
</dbReference>
<dbReference type="GO" id="GO:0015413">
    <property type="term" value="F:ABC-type nickel transporter activity"/>
    <property type="evidence" value="ECO:0007669"/>
    <property type="project" value="UniProtKB-EC"/>
</dbReference>
<dbReference type="GO" id="GO:0005524">
    <property type="term" value="F:ATP binding"/>
    <property type="evidence" value="ECO:0007669"/>
    <property type="project" value="UniProtKB-KW"/>
</dbReference>
<dbReference type="GO" id="GO:0016887">
    <property type="term" value="F:ATP hydrolysis activity"/>
    <property type="evidence" value="ECO:0007669"/>
    <property type="project" value="InterPro"/>
</dbReference>
<dbReference type="FunFam" id="3.40.50.300:FF:001826">
    <property type="entry name" value="Nickel import system ATP-binding protein NikD"/>
    <property type="match status" value="1"/>
</dbReference>
<dbReference type="Gene3D" id="3.40.50.300">
    <property type="entry name" value="P-loop containing nucleotide triphosphate hydrolases"/>
    <property type="match status" value="1"/>
</dbReference>
<dbReference type="InterPro" id="IPR003593">
    <property type="entry name" value="AAA+_ATPase"/>
</dbReference>
<dbReference type="InterPro" id="IPR050388">
    <property type="entry name" value="ABC_Ni/Peptide_Import"/>
</dbReference>
<dbReference type="InterPro" id="IPR003439">
    <property type="entry name" value="ABC_transporter-like_ATP-bd"/>
</dbReference>
<dbReference type="InterPro" id="IPR027417">
    <property type="entry name" value="P-loop_NTPase"/>
</dbReference>
<dbReference type="PANTHER" id="PTHR43297:SF13">
    <property type="entry name" value="NICKEL ABC TRANSPORTER, ATP-BINDING PROTEIN"/>
    <property type="match status" value="1"/>
</dbReference>
<dbReference type="PANTHER" id="PTHR43297">
    <property type="entry name" value="OLIGOPEPTIDE TRANSPORT ATP-BINDING PROTEIN APPD"/>
    <property type="match status" value="1"/>
</dbReference>
<dbReference type="Pfam" id="PF00005">
    <property type="entry name" value="ABC_tran"/>
    <property type="match status" value="1"/>
</dbReference>
<dbReference type="SMART" id="SM00382">
    <property type="entry name" value="AAA"/>
    <property type="match status" value="1"/>
</dbReference>
<dbReference type="SUPFAM" id="SSF52540">
    <property type="entry name" value="P-loop containing nucleoside triphosphate hydrolases"/>
    <property type="match status" value="1"/>
</dbReference>
<dbReference type="PROSITE" id="PS50893">
    <property type="entry name" value="ABC_TRANSPORTER_2"/>
    <property type="match status" value="1"/>
</dbReference>